<feature type="signal peptide" evidence="1">
    <location>
        <begin position="1"/>
        <end position="24"/>
    </location>
</feature>
<feature type="chain" id="PRO_0000002730" description="Streptavidin-V1">
    <location>
        <begin position="25"/>
        <end position="183"/>
    </location>
</feature>
<feature type="domain" description="Avidin-like" evidence="2">
    <location>
        <begin position="37"/>
        <end position="159"/>
    </location>
</feature>
<feature type="short sequence motif" description="Cell attachment site; atypical">
    <location>
        <begin position="83"/>
        <end position="85"/>
    </location>
</feature>
<feature type="binding site" evidence="1">
    <location>
        <position position="67"/>
    </location>
    <ligand>
        <name>biotin</name>
        <dbReference type="ChEBI" id="CHEBI:57586"/>
    </ligand>
</feature>
<feature type="binding site" evidence="1">
    <location>
        <position position="78"/>
    </location>
    <ligand>
        <name>biotin</name>
        <dbReference type="ChEBI" id="CHEBI:57586"/>
    </ligand>
</feature>
<feature type="binding site" evidence="1">
    <location>
        <position position="116"/>
    </location>
    <ligand>
        <name>biotin</name>
        <dbReference type="ChEBI" id="CHEBI:57586"/>
    </ligand>
</feature>
<feature type="binding site" evidence="1">
    <location>
        <position position="132"/>
    </location>
    <ligand>
        <name>biotin</name>
        <dbReference type="ChEBI" id="CHEBI:57586"/>
    </ligand>
</feature>
<feature type="binding site" evidence="1">
    <location>
        <position position="144"/>
    </location>
    <ligand>
        <name>biotin</name>
        <dbReference type="ChEBI" id="CHEBI:57586"/>
    </ligand>
</feature>
<organism>
    <name type="scientific">Streptomyces violaceus</name>
    <name type="common">Streptomyces venezuelae</name>
    <dbReference type="NCBI Taxonomy" id="1936"/>
    <lineage>
        <taxon>Bacteria</taxon>
        <taxon>Bacillati</taxon>
        <taxon>Actinomycetota</taxon>
        <taxon>Actinomycetes</taxon>
        <taxon>Kitasatosporales</taxon>
        <taxon>Streptomycetaceae</taxon>
        <taxon>Streptomyces</taxon>
    </lineage>
</organism>
<evidence type="ECO:0000250" key="1"/>
<evidence type="ECO:0000255" key="2">
    <source>
        <dbReference type="PROSITE-ProRule" id="PRU00656"/>
    </source>
</evidence>
<evidence type="ECO:0000305" key="3"/>
<sequence>MRKIVVAAIAVSLTTVSITASASADPSKDSKAQVSAAEAGITGTWYNQLGSTFIVTAGADGALTGTYESAVGNAESRYVLTGRYDSAPATDGSGTALGWTVAWKNNYRNAHSATTWSGQYVGGTEARINTQWLLTSGTTEANAWKSTLVGHDTFTKVKPSAASIDAAKKAGVNNGNPLDAVQQ</sequence>
<keyword id="KW-0092">Biotin</keyword>
<keyword id="KW-0964">Secreted</keyword>
<keyword id="KW-0732">Signal</keyword>
<proteinExistence type="inferred from homology"/>
<dbReference type="EMBL" id="S78777">
    <property type="protein sequence ID" value="AAB35015.1"/>
    <property type="molecule type" value="Genomic_DNA"/>
</dbReference>
<dbReference type="SMR" id="Q53532"/>
<dbReference type="GO" id="GO:0005576">
    <property type="term" value="C:extracellular region"/>
    <property type="evidence" value="ECO:0007669"/>
    <property type="project" value="UniProtKB-SubCell"/>
</dbReference>
<dbReference type="GO" id="GO:0009374">
    <property type="term" value="F:biotin binding"/>
    <property type="evidence" value="ECO:0007669"/>
    <property type="project" value="InterPro"/>
</dbReference>
<dbReference type="Gene3D" id="2.40.128.30">
    <property type="entry name" value="Avidin-like"/>
    <property type="match status" value="1"/>
</dbReference>
<dbReference type="InterPro" id="IPR005469">
    <property type="entry name" value="Avidin"/>
</dbReference>
<dbReference type="InterPro" id="IPR017889">
    <property type="entry name" value="Avidin-like_CS"/>
</dbReference>
<dbReference type="InterPro" id="IPR036896">
    <property type="entry name" value="Avidin-like_sf"/>
</dbReference>
<dbReference type="InterPro" id="IPR005468">
    <property type="entry name" value="Avidin/str"/>
</dbReference>
<dbReference type="InterPro" id="IPR051764">
    <property type="entry name" value="Avidin/Streptavidin-rel"/>
</dbReference>
<dbReference type="NCBIfam" id="NF047623">
    <property type="entry name" value="Stavidin"/>
    <property type="match status" value="1"/>
</dbReference>
<dbReference type="PANTHER" id="PTHR34399">
    <property type="entry name" value="AVIDIN-RELATED"/>
    <property type="match status" value="1"/>
</dbReference>
<dbReference type="Pfam" id="PF01382">
    <property type="entry name" value="Avidin"/>
    <property type="match status" value="1"/>
</dbReference>
<dbReference type="PRINTS" id="PR00709">
    <property type="entry name" value="AVIDIN"/>
</dbReference>
<dbReference type="SUPFAM" id="SSF50876">
    <property type="entry name" value="Avidin/streptavidin"/>
    <property type="match status" value="1"/>
</dbReference>
<dbReference type="PROSITE" id="PS00577">
    <property type="entry name" value="AVIDIN_1"/>
    <property type="match status" value="1"/>
</dbReference>
<dbReference type="PROSITE" id="PS51326">
    <property type="entry name" value="AVIDIN_2"/>
    <property type="match status" value="1"/>
</dbReference>
<name>SAV1_STRVL</name>
<comment type="function">
    <text>The biological function of streptavidin is not known. Forms a strong non-covalent specific complex with biotin (one molecule of biotin per subunit of streptavidin).</text>
</comment>
<comment type="subunit">
    <text evidence="2">Homotetramer.</text>
</comment>
<comment type="subcellular location">
    <subcellularLocation>
        <location>Secreted</location>
    </subcellularLocation>
</comment>
<comment type="similarity">
    <text evidence="3">Belongs to the avidin/streptavidin family.</text>
</comment>
<reference key="1">
    <citation type="journal article" date="1995" name="Biochim. Biophys. Acta">
        <title>Close similarity among streptavidin-like, biotin-binding proteins from Streptomyces.</title>
        <authorList>
            <person name="Bayer E.A."/>
            <person name="Kulik T."/>
            <person name="Adar R."/>
            <person name="Wilchek M."/>
        </authorList>
    </citation>
    <scope>NUCLEOTIDE SEQUENCE [GENOMIC DNA]</scope>
</reference>
<accession>Q53532</accession>
<protein>
    <recommendedName>
        <fullName>Streptavidin-V1</fullName>
        <shortName>SA V1</shortName>
    </recommendedName>
</protein>